<evidence type="ECO:0000255" key="1">
    <source>
        <dbReference type="HAMAP-Rule" id="MF_01033"/>
    </source>
</evidence>
<dbReference type="EC" id="1.1.1.85" evidence="1"/>
<dbReference type="EMBL" id="CP000323">
    <property type="protein sequence ID" value="ABE75348.1"/>
    <property type="molecule type" value="Genomic_DNA"/>
</dbReference>
<dbReference type="RefSeq" id="WP_011513899.1">
    <property type="nucleotide sequence ID" value="NC_007969.1"/>
</dbReference>
<dbReference type="SMR" id="Q1QAF5"/>
<dbReference type="STRING" id="335284.Pcryo_1571"/>
<dbReference type="KEGG" id="pcr:Pcryo_1571"/>
<dbReference type="eggNOG" id="COG0473">
    <property type="taxonomic scope" value="Bacteria"/>
</dbReference>
<dbReference type="HOGENOM" id="CLU_031953_0_3_6"/>
<dbReference type="UniPathway" id="UPA00048">
    <property type="reaction ID" value="UER00072"/>
</dbReference>
<dbReference type="Proteomes" id="UP000002425">
    <property type="component" value="Chromosome"/>
</dbReference>
<dbReference type="GO" id="GO:0005829">
    <property type="term" value="C:cytosol"/>
    <property type="evidence" value="ECO:0007669"/>
    <property type="project" value="TreeGrafter"/>
</dbReference>
<dbReference type="GO" id="GO:0003862">
    <property type="term" value="F:3-isopropylmalate dehydrogenase activity"/>
    <property type="evidence" value="ECO:0007669"/>
    <property type="project" value="UniProtKB-UniRule"/>
</dbReference>
<dbReference type="GO" id="GO:0000287">
    <property type="term" value="F:magnesium ion binding"/>
    <property type="evidence" value="ECO:0007669"/>
    <property type="project" value="InterPro"/>
</dbReference>
<dbReference type="GO" id="GO:0051287">
    <property type="term" value="F:NAD binding"/>
    <property type="evidence" value="ECO:0007669"/>
    <property type="project" value="InterPro"/>
</dbReference>
<dbReference type="GO" id="GO:0009098">
    <property type="term" value="P:L-leucine biosynthetic process"/>
    <property type="evidence" value="ECO:0007669"/>
    <property type="project" value="UniProtKB-UniRule"/>
</dbReference>
<dbReference type="FunFam" id="3.40.718.10:FF:000028">
    <property type="entry name" value="3-isopropylmalate dehydrogenase"/>
    <property type="match status" value="1"/>
</dbReference>
<dbReference type="Gene3D" id="3.40.718.10">
    <property type="entry name" value="Isopropylmalate Dehydrogenase"/>
    <property type="match status" value="1"/>
</dbReference>
<dbReference type="HAMAP" id="MF_01033">
    <property type="entry name" value="LeuB_type1"/>
    <property type="match status" value="1"/>
</dbReference>
<dbReference type="InterPro" id="IPR019818">
    <property type="entry name" value="IsoCit/isopropylmalate_DH_CS"/>
</dbReference>
<dbReference type="InterPro" id="IPR024084">
    <property type="entry name" value="IsoPropMal-DH-like_dom"/>
</dbReference>
<dbReference type="InterPro" id="IPR004429">
    <property type="entry name" value="Isopropylmalate_DH"/>
</dbReference>
<dbReference type="NCBIfam" id="TIGR00169">
    <property type="entry name" value="leuB"/>
    <property type="match status" value="1"/>
</dbReference>
<dbReference type="PANTHER" id="PTHR42979">
    <property type="entry name" value="3-ISOPROPYLMALATE DEHYDROGENASE"/>
    <property type="match status" value="1"/>
</dbReference>
<dbReference type="PANTHER" id="PTHR42979:SF1">
    <property type="entry name" value="3-ISOPROPYLMALATE DEHYDROGENASE"/>
    <property type="match status" value="1"/>
</dbReference>
<dbReference type="Pfam" id="PF00180">
    <property type="entry name" value="Iso_dh"/>
    <property type="match status" value="1"/>
</dbReference>
<dbReference type="SMART" id="SM01329">
    <property type="entry name" value="Iso_dh"/>
    <property type="match status" value="1"/>
</dbReference>
<dbReference type="SUPFAM" id="SSF53659">
    <property type="entry name" value="Isocitrate/Isopropylmalate dehydrogenase-like"/>
    <property type="match status" value="1"/>
</dbReference>
<dbReference type="PROSITE" id="PS00470">
    <property type="entry name" value="IDH_IMDH"/>
    <property type="match status" value="1"/>
</dbReference>
<proteinExistence type="inferred from homology"/>
<name>LEU3_PSYCK</name>
<gene>
    <name evidence="1" type="primary">leuB</name>
    <name type="ordered locus">Pcryo_1571</name>
</gene>
<keyword id="KW-0028">Amino-acid biosynthesis</keyword>
<keyword id="KW-0100">Branched-chain amino acid biosynthesis</keyword>
<keyword id="KW-0963">Cytoplasm</keyword>
<keyword id="KW-0432">Leucine biosynthesis</keyword>
<keyword id="KW-0460">Magnesium</keyword>
<keyword id="KW-0464">Manganese</keyword>
<keyword id="KW-0479">Metal-binding</keyword>
<keyword id="KW-0520">NAD</keyword>
<keyword id="KW-0560">Oxidoreductase</keyword>
<sequence length="367" mass="39200">MATILTLAGDGIGPEIMTQAIDVLNAVNDKFALGLTLESGLIGGVAVDSTGEPLPEETLQRARAADAVLLGAVGGPKWDGIERSKRPERGLLKIRSELGLFANLRVAKLYPQLVNASSIKPEIISGLDLLIVRELTGGIYFGEPRGIRTLENGEQQGYNTMVYSTSEINRIGKVAFELAQTRAQAAGTAAKVCSIDKANVLEVTELWKQTMIELQQSEYSDVALSHMYADNACMQLIKDPKQFDVMVTGNLFGDILSDEAAMLTGSIGMLPSASLDEAGKGMYEPCHGSAPDIAGQDIANPLATILSVSMMLRYTFKQEAAAQAIEQAVSDVLDDGLRTVDILDRNEAGLIQVGCQQMGQAVLAKLI</sequence>
<organism>
    <name type="scientific">Psychrobacter cryohalolentis (strain ATCC BAA-1226 / DSM 17306 / VKM B-2378 / K5)</name>
    <dbReference type="NCBI Taxonomy" id="335284"/>
    <lineage>
        <taxon>Bacteria</taxon>
        <taxon>Pseudomonadati</taxon>
        <taxon>Pseudomonadota</taxon>
        <taxon>Gammaproteobacteria</taxon>
        <taxon>Moraxellales</taxon>
        <taxon>Moraxellaceae</taxon>
        <taxon>Psychrobacter</taxon>
    </lineage>
</organism>
<reference key="1">
    <citation type="submission" date="2006-03" db="EMBL/GenBank/DDBJ databases">
        <title>Complete sequence of chromosome of Psychrobacter cryohalolentis K5.</title>
        <authorList>
            <consortium name="US DOE Joint Genome Institute"/>
            <person name="Copeland A."/>
            <person name="Lucas S."/>
            <person name="Lapidus A."/>
            <person name="Barry K."/>
            <person name="Detter J.C."/>
            <person name="Glavina T."/>
            <person name="Hammon N."/>
            <person name="Israni S."/>
            <person name="Dalin E."/>
            <person name="Tice H."/>
            <person name="Pitluck S."/>
            <person name="Brettin T."/>
            <person name="Bruce D."/>
            <person name="Han C."/>
            <person name="Tapia R."/>
            <person name="Sims D.R."/>
            <person name="Gilna P."/>
            <person name="Schmutz J."/>
            <person name="Larimer F."/>
            <person name="Land M."/>
            <person name="Hauser L."/>
            <person name="Kyrpides N."/>
            <person name="Kim E."/>
            <person name="Richardson P."/>
        </authorList>
    </citation>
    <scope>NUCLEOTIDE SEQUENCE [LARGE SCALE GENOMIC DNA]</scope>
    <source>
        <strain>ATCC BAA-1226 / DSM 17306 / VKM B-2378 / K5</strain>
    </source>
</reference>
<comment type="function">
    <text evidence="1">Catalyzes the oxidation of 3-carboxy-2-hydroxy-4-methylpentanoate (3-isopropylmalate) to 3-carboxy-4-methyl-2-oxopentanoate. The product decarboxylates to 4-methyl-2 oxopentanoate.</text>
</comment>
<comment type="catalytic activity">
    <reaction evidence="1">
        <text>(2R,3S)-3-isopropylmalate + NAD(+) = 4-methyl-2-oxopentanoate + CO2 + NADH</text>
        <dbReference type="Rhea" id="RHEA:32271"/>
        <dbReference type="ChEBI" id="CHEBI:16526"/>
        <dbReference type="ChEBI" id="CHEBI:17865"/>
        <dbReference type="ChEBI" id="CHEBI:35121"/>
        <dbReference type="ChEBI" id="CHEBI:57540"/>
        <dbReference type="ChEBI" id="CHEBI:57945"/>
        <dbReference type="EC" id="1.1.1.85"/>
    </reaction>
</comment>
<comment type="cofactor">
    <cofactor evidence="1">
        <name>Mg(2+)</name>
        <dbReference type="ChEBI" id="CHEBI:18420"/>
    </cofactor>
    <cofactor evidence="1">
        <name>Mn(2+)</name>
        <dbReference type="ChEBI" id="CHEBI:29035"/>
    </cofactor>
    <text evidence="1">Binds 1 Mg(2+) or Mn(2+) ion per subunit.</text>
</comment>
<comment type="pathway">
    <text evidence="1">Amino-acid biosynthesis; L-leucine biosynthesis; L-leucine from 3-methyl-2-oxobutanoate: step 3/4.</text>
</comment>
<comment type="subunit">
    <text evidence="1">Homodimer.</text>
</comment>
<comment type="subcellular location">
    <subcellularLocation>
        <location evidence="1">Cytoplasm</location>
    </subcellularLocation>
</comment>
<comment type="similarity">
    <text evidence="1">Belongs to the isocitrate and isopropylmalate dehydrogenases family. LeuB type 1 subfamily.</text>
</comment>
<accession>Q1QAF5</accession>
<protein>
    <recommendedName>
        <fullName evidence="1">3-isopropylmalate dehydrogenase</fullName>
        <ecNumber evidence="1">1.1.1.85</ecNumber>
    </recommendedName>
    <alternativeName>
        <fullName evidence="1">3-IPM-DH</fullName>
    </alternativeName>
    <alternativeName>
        <fullName evidence="1">Beta-IPM dehydrogenase</fullName>
        <shortName evidence="1">IMDH</shortName>
    </alternativeName>
</protein>
<feature type="chain" id="PRO_0000250127" description="3-isopropylmalate dehydrogenase">
    <location>
        <begin position="1"/>
        <end position="367"/>
    </location>
</feature>
<feature type="binding site" evidence="1">
    <location>
        <begin position="75"/>
        <end position="88"/>
    </location>
    <ligand>
        <name>NAD(+)</name>
        <dbReference type="ChEBI" id="CHEBI:57540"/>
    </ligand>
</feature>
<feature type="binding site" evidence="1">
    <location>
        <position position="95"/>
    </location>
    <ligand>
        <name>substrate</name>
    </ligand>
</feature>
<feature type="binding site" evidence="1">
    <location>
        <position position="105"/>
    </location>
    <ligand>
        <name>substrate</name>
    </ligand>
</feature>
<feature type="binding site" evidence="1">
    <location>
        <position position="133"/>
    </location>
    <ligand>
        <name>substrate</name>
    </ligand>
</feature>
<feature type="binding site" evidence="1">
    <location>
        <position position="230"/>
    </location>
    <ligand>
        <name>Mg(2+)</name>
        <dbReference type="ChEBI" id="CHEBI:18420"/>
    </ligand>
</feature>
<feature type="binding site" evidence="1">
    <location>
        <position position="230"/>
    </location>
    <ligand>
        <name>substrate</name>
    </ligand>
</feature>
<feature type="binding site" evidence="1">
    <location>
        <position position="254"/>
    </location>
    <ligand>
        <name>Mg(2+)</name>
        <dbReference type="ChEBI" id="CHEBI:18420"/>
    </ligand>
</feature>
<feature type="binding site" evidence="1">
    <location>
        <position position="258"/>
    </location>
    <ligand>
        <name>Mg(2+)</name>
        <dbReference type="ChEBI" id="CHEBI:18420"/>
    </ligand>
</feature>
<feature type="binding site" evidence="1">
    <location>
        <begin position="288"/>
        <end position="300"/>
    </location>
    <ligand>
        <name>NAD(+)</name>
        <dbReference type="ChEBI" id="CHEBI:57540"/>
    </ligand>
</feature>
<feature type="site" description="Important for catalysis" evidence="1">
    <location>
        <position position="140"/>
    </location>
</feature>
<feature type="site" description="Important for catalysis" evidence="1">
    <location>
        <position position="197"/>
    </location>
</feature>